<gene>
    <name type="primary">MT-CO2</name>
    <name type="synonym">COII</name>
    <name type="synonym">COX2</name>
    <name type="synonym">COXII</name>
    <name type="synonym">MTCO2</name>
</gene>
<comment type="function">
    <text evidence="2">Component of the cytochrome c oxidase, the last enzyme in the mitochondrial electron transport chain which drives oxidative phosphorylation. The respiratory chain contains 3 multisubunit complexes succinate dehydrogenase (complex II, CII), ubiquinol-cytochrome c oxidoreductase (cytochrome b-c1 complex, complex III, CIII) and cytochrome c oxidase (complex IV, CIV), that cooperate to transfer electrons derived from NADH and succinate to molecular oxygen, creating an electrochemical gradient over the inner membrane that drives transmembrane transport and the ATP synthase. Cytochrome c oxidase is the component of the respiratory chain that catalyzes the reduction of oxygen to water. Electrons originating from reduced cytochrome c in the intermembrane space (IMS) are transferred via the dinuclear copper A center (CU(A)) of subunit 2 and heme A of subunit 1 to the active site in subunit 1, a binuclear center (BNC) formed by heme A3 and copper B (CU(B)). The BNC reduces molecular oxygen to 2 water molecules using 4 electrons from cytochrome c in the IMS and 4 protons from the mitochondrial matrix.</text>
</comment>
<comment type="catalytic activity">
    <reaction evidence="2">
        <text>4 Fe(II)-[cytochrome c] + O2 + 8 H(+)(in) = 4 Fe(III)-[cytochrome c] + 2 H2O + 4 H(+)(out)</text>
        <dbReference type="Rhea" id="RHEA:11436"/>
        <dbReference type="Rhea" id="RHEA-COMP:10350"/>
        <dbReference type="Rhea" id="RHEA-COMP:14399"/>
        <dbReference type="ChEBI" id="CHEBI:15377"/>
        <dbReference type="ChEBI" id="CHEBI:15378"/>
        <dbReference type="ChEBI" id="CHEBI:15379"/>
        <dbReference type="ChEBI" id="CHEBI:29033"/>
        <dbReference type="ChEBI" id="CHEBI:29034"/>
        <dbReference type="EC" id="7.1.1.9"/>
    </reaction>
    <physiologicalReaction direction="left-to-right" evidence="2">
        <dbReference type="Rhea" id="RHEA:11437"/>
    </physiologicalReaction>
</comment>
<comment type="cofactor">
    <cofactor evidence="3">
        <name>Cu cation</name>
        <dbReference type="ChEBI" id="CHEBI:23378"/>
    </cofactor>
    <text evidence="3">Binds a dinuclear copper A center per subunit.</text>
</comment>
<comment type="subunit">
    <text evidence="1 3">Component of the cytochrome c oxidase (complex IV, CIV), a multisubunit enzyme composed of 14 subunits. The complex is composed of a catalytic core of 3 subunits MT-CO1, MT-CO2 and MT-CO3, encoded in the mitochondrial DNA, and 11 supernumerary subunits COX4I, COX5A, COX5B, COX6A, COX6B, COX6C, COX7A, COX7B, COX7C, COX8 and NDUFA4, which are encoded in the nuclear genome. The complex exists as a monomer or a dimer and forms supercomplexes (SCs) in the inner mitochondrial membrane with NADH-ubiquinone oxidoreductase (complex I, CI) and ubiquinol-cytochrome c oxidoreductase (cytochrome b-c1 complex, complex III, CIII), resulting in different assemblies (supercomplex SCI(1)III(2)IV(1) and megacomplex MCI(2)III(2)IV(2)) (By similarity). Found in a complex with TMEM177, COA6, COX18, COX20, SCO1 and SCO2. Interacts with TMEM177 in a COX20-dependent manner. Interacts with COX20. Interacts with COX16 (By similarity).</text>
</comment>
<comment type="subcellular location">
    <subcellularLocation>
        <location evidence="3">Mitochondrion inner membrane</location>
        <topology evidence="3">Multi-pass membrane protein</topology>
    </subcellularLocation>
</comment>
<comment type="similarity">
    <text evidence="4">Belongs to the cytochrome c oxidase subunit 2 family.</text>
</comment>
<protein>
    <recommendedName>
        <fullName>Cytochrome c oxidase subunit 2</fullName>
        <ecNumber>7.1.1.9</ecNumber>
    </recommendedName>
    <alternativeName>
        <fullName>Cytochrome c oxidase polypeptide II</fullName>
    </alternativeName>
</protein>
<organism>
    <name type="scientific">Equus asinus</name>
    <name type="common">Donkey</name>
    <name type="synonym">Equus africanus asinus</name>
    <dbReference type="NCBI Taxonomy" id="9793"/>
    <lineage>
        <taxon>Eukaryota</taxon>
        <taxon>Metazoa</taxon>
        <taxon>Chordata</taxon>
        <taxon>Craniata</taxon>
        <taxon>Vertebrata</taxon>
        <taxon>Euteleostomi</taxon>
        <taxon>Mammalia</taxon>
        <taxon>Eutheria</taxon>
        <taxon>Laurasiatheria</taxon>
        <taxon>Perissodactyla</taxon>
        <taxon>Equidae</taxon>
        <taxon>Equus</taxon>
    </lineage>
</organism>
<keyword id="KW-0186">Copper</keyword>
<keyword id="KW-0249">Electron transport</keyword>
<keyword id="KW-0460">Magnesium</keyword>
<keyword id="KW-0472">Membrane</keyword>
<keyword id="KW-0479">Metal-binding</keyword>
<keyword id="KW-0496">Mitochondrion</keyword>
<keyword id="KW-0999">Mitochondrion inner membrane</keyword>
<keyword id="KW-0597">Phosphoprotein</keyword>
<keyword id="KW-1185">Reference proteome</keyword>
<keyword id="KW-0679">Respiratory chain</keyword>
<keyword id="KW-1278">Translocase</keyword>
<keyword id="KW-0812">Transmembrane</keyword>
<keyword id="KW-1133">Transmembrane helix</keyword>
<keyword id="KW-0813">Transport</keyword>
<feature type="chain" id="PRO_0000183594" description="Cytochrome c oxidase subunit 2">
    <location>
        <begin position="1"/>
        <end position="227"/>
    </location>
</feature>
<feature type="topological domain" description="Mitochondrial intermembrane" evidence="3">
    <location>
        <begin position="1"/>
        <end position="14"/>
    </location>
</feature>
<feature type="transmembrane region" description="Helical; Name=I" evidence="3">
    <location>
        <begin position="15"/>
        <end position="45"/>
    </location>
</feature>
<feature type="topological domain" description="Mitochondrial matrix" evidence="3">
    <location>
        <begin position="46"/>
        <end position="59"/>
    </location>
</feature>
<feature type="transmembrane region" description="Helical; Name=II" evidence="3">
    <location>
        <begin position="60"/>
        <end position="87"/>
    </location>
</feature>
<feature type="topological domain" description="Mitochondrial intermembrane" evidence="3">
    <location>
        <begin position="88"/>
        <end position="227"/>
    </location>
</feature>
<feature type="binding site" evidence="3">
    <location>
        <position position="161"/>
    </location>
    <ligand>
        <name>Cu cation</name>
        <dbReference type="ChEBI" id="CHEBI:23378"/>
        <label>A1</label>
    </ligand>
</feature>
<feature type="binding site" evidence="3">
    <location>
        <position position="196"/>
    </location>
    <ligand>
        <name>Cu cation</name>
        <dbReference type="ChEBI" id="CHEBI:23378"/>
        <label>A1</label>
    </ligand>
</feature>
<feature type="binding site" evidence="3">
    <location>
        <position position="196"/>
    </location>
    <ligand>
        <name>Cu cation</name>
        <dbReference type="ChEBI" id="CHEBI:23378"/>
        <label>A2</label>
    </ligand>
</feature>
<feature type="binding site" evidence="3">
    <location>
        <position position="198"/>
    </location>
    <ligand>
        <name>Cu cation</name>
        <dbReference type="ChEBI" id="CHEBI:23378"/>
        <label>A2</label>
    </ligand>
</feature>
<feature type="binding site" evidence="3">
    <location>
        <position position="198"/>
    </location>
    <ligand>
        <name>Mg(2+)</name>
        <dbReference type="ChEBI" id="CHEBI:18420"/>
        <note>ligand shared with MT-CO1</note>
    </ligand>
</feature>
<feature type="binding site" evidence="3">
    <location>
        <position position="200"/>
    </location>
    <ligand>
        <name>Cu cation</name>
        <dbReference type="ChEBI" id="CHEBI:23378"/>
        <label>A1</label>
    </ligand>
</feature>
<feature type="binding site" evidence="3">
    <location>
        <position position="200"/>
    </location>
    <ligand>
        <name>Cu cation</name>
        <dbReference type="ChEBI" id="CHEBI:23378"/>
        <label>A2</label>
    </ligand>
</feature>
<feature type="binding site" evidence="3">
    <location>
        <position position="204"/>
    </location>
    <ligand>
        <name>Cu cation</name>
        <dbReference type="ChEBI" id="CHEBI:23378"/>
        <label>A2</label>
    </ligand>
</feature>
<feature type="binding site" evidence="3">
    <location>
        <position position="207"/>
    </location>
    <ligand>
        <name>Cu cation</name>
        <dbReference type="ChEBI" id="CHEBI:23378"/>
        <label>A1</label>
    </ligand>
</feature>
<accession>P92478</accession>
<sequence length="227" mass="25978">MAYPFQLGFQDATSPIMEELLHFHDHTLMIVFLISSLVLYIISSMLTTKLTHTSTMDAQEVETIWTILPAIILILIALPSLRILYMMDEINNPSLTVKTMGHQWYWSYEYTDYEDLTFDSYMIPTSDLKPGELRLLEVDNRVVLPMEMTIRMLISSEDVLHSWAVPSLGLKTDAIPGRLNQTTLVASRPGLYYGQCSEICGSNHSFMPIVLELVPLKYFEEWSASML</sequence>
<proteinExistence type="inferred from homology"/>
<name>COX2_EQUAS</name>
<reference key="1">
    <citation type="journal article" date="1996" name="J. Mol. Evol.">
        <title>The complete mitochondrial DNA (mtDNA) of the donkey and mtDNA comparisons among four closely related mammalian species-pairs.</title>
        <authorList>
            <person name="Xu X."/>
            <person name="Gullberg A."/>
            <person name="Arnason U."/>
        </authorList>
    </citation>
    <scope>NUCLEOTIDE SEQUENCE [GENOMIC DNA]</scope>
    <source>
        <tissue>Kidney</tissue>
    </source>
</reference>
<evidence type="ECO:0000250" key="1">
    <source>
        <dbReference type="UniProtKB" id="P00403"/>
    </source>
</evidence>
<evidence type="ECO:0000250" key="2">
    <source>
        <dbReference type="UniProtKB" id="P00410"/>
    </source>
</evidence>
<evidence type="ECO:0000250" key="3">
    <source>
        <dbReference type="UniProtKB" id="P68530"/>
    </source>
</evidence>
<evidence type="ECO:0000305" key="4"/>
<geneLocation type="mitochondrion"/>
<dbReference type="EC" id="7.1.1.9"/>
<dbReference type="EMBL" id="X97337">
    <property type="protein sequence ID" value="CAA66017.1"/>
    <property type="molecule type" value="Genomic_DNA"/>
</dbReference>
<dbReference type="PIR" id="T11366">
    <property type="entry name" value="T11366"/>
</dbReference>
<dbReference type="RefSeq" id="NP_007384.1">
    <property type="nucleotide sequence ID" value="NC_001788.1"/>
</dbReference>
<dbReference type="SMR" id="P92478"/>
<dbReference type="GeneID" id="808064"/>
<dbReference type="KEGG" id="eai:808064"/>
<dbReference type="CTD" id="4513"/>
<dbReference type="Proteomes" id="UP000694387">
    <property type="component" value="Mitochondrion MT"/>
</dbReference>
<dbReference type="GO" id="GO:0005743">
    <property type="term" value="C:mitochondrial inner membrane"/>
    <property type="evidence" value="ECO:0007669"/>
    <property type="project" value="UniProtKB-SubCell"/>
</dbReference>
<dbReference type="GO" id="GO:0045277">
    <property type="term" value="C:respiratory chain complex IV"/>
    <property type="evidence" value="ECO:0000250"/>
    <property type="project" value="UniProtKB"/>
</dbReference>
<dbReference type="GO" id="GO:0005507">
    <property type="term" value="F:copper ion binding"/>
    <property type="evidence" value="ECO:0007669"/>
    <property type="project" value="InterPro"/>
</dbReference>
<dbReference type="GO" id="GO:0004129">
    <property type="term" value="F:cytochrome-c oxidase activity"/>
    <property type="evidence" value="ECO:0007669"/>
    <property type="project" value="UniProtKB-EC"/>
</dbReference>
<dbReference type="GO" id="GO:0042773">
    <property type="term" value="P:ATP synthesis coupled electron transport"/>
    <property type="evidence" value="ECO:0007669"/>
    <property type="project" value="TreeGrafter"/>
</dbReference>
<dbReference type="CDD" id="cd13912">
    <property type="entry name" value="CcO_II_C"/>
    <property type="match status" value="1"/>
</dbReference>
<dbReference type="FunFam" id="1.10.287.90:FF:000001">
    <property type="entry name" value="Cytochrome c oxidase subunit 2"/>
    <property type="match status" value="1"/>
</dbReference>
<dbReference type="FunFam" id="2.60.40.420:FF:000001">
    <property type="entry name" value="Cytochrome c oxidase subunit 2"/>
    <property type="match status" value="1"/>
</dbReference>
<dbReference type="Gene3D" id="1.10.287.90">
    <property type="match status" value="1"/>
</dbReference>
<dbReference type="Gene3D" id="2.60.40.420">
    <property type="entry name" value="Cupredoxins - blue copper proteins"/>
    <property type="match status" value="1"/>
</dbReference>
<dbReference type="InterPro" id="IPR045187">
    <property type="entry name" value="CcO_II"/>
</dbReference>
<dbReference type="InterPro" id="IPR002429">
    <property type="entry name" value="CcO_II-like_C"/>
</dbReference>
<dbReference type="InterPro" id="IPR034210">
    <property type="entry name" value="CcO_II_C"/>
</dbReference>
<dbReference type="InterPro" id="IPR001505">
    <property type="entry name" value="Copper_CuA"/>
</dbReference>
<dbReference type="InterPro" id="IPR008972">
    <property type="entry name" value="Cupredoxin"/>
</dbReference>
<dbReference type="InterPro" id="IPR014222">
    <property type="entry name" value="Cyt_c_oxidase_su2"/>
</dbReference>
<dbReference type="InterPro" id="IPR011759">
    <property type="entry name" value="Cyt_c_oxidase_su2_TM_dom"/>
</dbReference>
<dbReference type="InterPro" id="IPR036257">
    <property type="entry name" value="Cyt_c_oxidase_su2_TM_sf"/>
</dbReference>
<dbReference type="NCBIfam" id="TIGR02866">
    <property type="entry name" value="CoxB"/>
    <property type="match status" value="1"/>
</dbReference>
<dbReference type="PANTHER" id="PTHR22888:SF9">
    <property type="entry name" value="CYTOCHROME C OXIDASE SUBUNIT 2"/>
    <property type="match status" value="1"/>
</dbReference>
<dbReference type="PANTHER" id="PTHR22888">
    <property type="entry name" value="CYTOCHROME C OXIDASE, SUBUNIT II"/>
    <property type="match status" value="1"/>
</dbReference>
<dbReference type="Pfam" id="PF00116">
    <property type="entry name" value="COX2"/>
    <property type="match status" value="1"/>
</dbReference>
<dbReference type="Pfam" id="PF02790">
    <property type="entry name" value="COX2_TM"/>
    <property type="match status" value="1"/>
</dbReference>
<dbReference type="PRINTS" id="PR01166">
    <property type="entry name" value="CYCOXIDASEII"/>
</dbReference>
<dbReference type="SUPFAM" id="SSF49503">
    <property type="entry name" value="Cupredoxins"/>
    <property type="match status" value="1"/>
</dbReference>
<dbReference type="SUPFAM" id="SSF81464">
    <property type="entry name" value="Cytochrome c oxidase subunit II-like, transmembrane region"/>
    <property type="match status" value="1"/>
</dbReference>
<dbReference type="PROSITE" id="PS00078">
    <property type="entry name" value="COX2"/>
    <property type="match status" value="1"/>
</dbReference>
<dbReference type="PROSITE" id="PS50857">
    <property type="entry name" value="COX2_CUA"/>
    <property type="match status" value="1"/>
</dbReference>
<dbReference type="PROSITE" id="PS50999">
    <property type="entry name" value="COX2_TM"/>
    <property type="match status" value="1"/>
</dbReference>